<proteinExistence type="inferred from homology"/>
<comment type="subcellular location">
    <subcellularLocation>
        <location evidence="2">Cell membrane</location>
        <topology evidence="2">Multi-pass membrane protein</topology>
    </subcellularLocation>
</comment>
<comment type="similarity">
    <text evidence="2">Belongs to the chromate ion transporter (CHR) (TC 2.A.51) family.</text>
</comment>
<gene>
    <name type="ordered locus">MJ0718</name>
</gene>
<protein>
    <recommendedName>
        <fullName>Uncharacterized transporter MJ0718</fullName>
    </recommendedName>
</protein>
<organism>
    <name type="scientific">Methanocaldococcus jannaschii (strain ATCC 43067 / DSM 2661 / JAL-1 / JCM 10045 / NBRC 100440)</name>
    <name type="common">Methanococcus jannaschii</name>
    <dbReference type="NCBI Taxonomy" id="243232"/>
    <lineage>
        <taxon>Archaea</taxon>
        <taxon>Methanobacteriati</taxon>
        <taxon>Methanobacteriota</taxon>
        <taxon>Methanomada group</taxon>
        <taxon>Methanococci</taxon>
        <taxon>Methanococcales</taxon>
        <taxon>Methanocaldococcaceae</taxon>
        <taxon>Methanocaldococcus</taxon>
    </lineage>
</organism>
<reference key="1">
    <citation type="journal article" date="1996" name="Science">
        <title>Complete genome sequence of the methanogenic archaeon, Methanococcus jannaschii.</title>
        <authorList>
            <person name="Bult C.J."/>
            <person name="White O."/>
            <person name="Olsen G.J."/>
            <person name="Zhou L."/>
            <person name="Fleischmann R.D."/>
            <person name="Sutton G.G."/>
            <person name="Blake J.A."/>
            <person name="FitzGerald L.M."/>
            <person name="Clayton R.A."/>
            <person name="Gocayne J.D."/>
            <person name="Kerlavage A.R."/>
            <person name="Dougherty B.A."/>
            <person name="Tomb J.-F."/>
            <person name="Adams M.D."/>
            <person name="Reich C.I."/>
            <person name="Overbeek R."/>
            <person name="Kirkness E.F."/>
            <person name="Weinstock K.G."/>
            <person name="Merrick J.M."/>
            <person name="Glodek A."/>
            <person name="Scott J.L."/>
            <person name="Geoghagen N.S.M."/>
            <person name="Weidman J.F."/>
            <person name="Fuhrmann J.L."/>
            <person name="Nguyen D."/>
            <person name="Utterback T.R."/>
            <person name="Kelley J.M."/>
            <person name="Peterson J.D."/>
            <person name="Sadow P.W."/>
            <person name="Hanna M.C."/>
            <person name="Cotton M.D."/>
            <person name="Roberts K.M."/>
            <person name="Hurst M.A."/>
            <person name="Kaine B.P."/>
            <person name="Borodovsky M."/>
            <person name="Klenk H.-P."/>
            <person name="Fraser C.M."/>
            <person name="Smith H.O."/>
            <person name="Woese C.R."/>
            <person name="Venter J.C."/>
        </authorList>
    </citation>
    <scope>NUCLEOTIDE SEQUENCE [LARGE SCALE GENOMIC DNA]</scope>
    <source>
        <strain>ATCC 43067 / DSM 2661 / JAL-1 / JCM 10045 / NBRC 100440</strain>
    </source>
</reference>
<sequence length="402" mass="45132">MMMHPMNKTNKRDKMEKRNNPSALNIFMSFLKLGMVAFGGPTAIAYVREMVVDEKKWMDEKSFNNGVALAQIIPGASVMQVAAYVGFYLRGIVGAFAAFMAYALPAFLIMLFLTIIYMHVKSLPKTVSIFEALRIIVVSLAANGTLNFSKKNIRTIGDVFLLLISALLFILKFSPFIVIFVSIFIGFLMYRRDITKLSLKIDIPREKLRIYKYVAYLLFGVFLFNLILYMIDSKLFLLSTLMMKVDVFAFGGGYGSVPFMLHEVVDKYNLMDAKTFMDGIALGQITPGPIVITATFVGYIVGGFIGSIISTISVFTPSFIILLSSIPIFDSLKHNTIFKNILHMILVSFVGLLVAVTIRFALLVDWSIQALIIFIVSFLLLYKKYNMLLVVLLSLVLGYLIL</sequence>
<name>Y718_METJA</name>
<dbReference type="EMBL" id="L77117">
    <property type="protein sequence ID" value="AAB98712.1"/>
    <property type="molecule type" value="Genomic_DNA"/>
</dbReference>
<dbReference type="PIR" id="F64389">
    <property type="entry name" value="F64389"/>
</dbReference>
<dbReference type="SMR" id="Q58128"/>
<dbReference type="STRING" id="243232.MJ_0718"/>
<dbReference type="PaxDb" id="243232-MJ_0718"/>
<dbReference type="DNASU" id="1451595"/>
<dbReference type="EnsemblBacteria" id="AAB98712">
    <property type="protein sequence ID" value="AAB98712"/>
    <property type="gene ID" value="MJ_0718"/>
</dbReference>
<dbReference type="KEGG" id="mja:MJ_0718"/>
<dbReference type="eggNOG" id="arCOG06434">
    <property type="taxonomic scope" value="Archaea"/>
</dbReference>
<dbReference type="HOGENOM" id="CLU_018106_0_0_2"/>
<dbReference type="InParanoid" id="Q58128"/>
<dbReference type="OrthoDB" id="307554at2157"/>
<dbReference type="PhylomeDB" id="Q58128"/>
<dbReference type="Proteomes" id="UP000000805">
    <property type="component" value="Chromosome"/>
</dbReference>
<dbReference type="GO" id="GO:0005886">
    <property type="term" value="C:plasma membrane"/>
    <property type="evidence" value="ECO:0007669"/>
    <property type="project" value="UniProtKB-SubCell"/>
</dbReference>
<dbReference type="GO" id="GO:0015109">
    <property type="term" value="F:chromate transmembrane transporter activity"/>
    <property type="evidence" value="ECO:0007669"/>
    <property type="project" value="InterPro"/>
</dbReference>
<dbReference type="InterPro" id="IPR014047">
    <property type="entry name" value="Chr_Tranpt_l_chain"/>
</dbReference>
<dbReference type="InterPro" id="IPR052518">
    <property type="entry name" value="CHR_Transporter"/>
</dbReference>
<dbReference type="InterPro" id="IPR003370">
    <property type="entry name" value="Chromate_transpt"/>
</dbReference>
<dbReference type="NCBIfam" id="TIGR00937">
    <property type="entry name" value="2A51"/>
    <property type="match status" value="1"/>
</dbReference>
<dbReference type="PANTHER" id="PTHR43663">
    <property type="entry name" value="CHROMATE TRANSPORT PROTEIN-RELATED"/>
    <property type="match status" value="1"/>
</dbReference>
<dbReference type="PANTHER" id="PTHR43663:SF1">
    <property type="entry name" value="CHROMATE TRANSPORTER"/>
    <property type="match status" value="1"/>
</dbReference>
<dbReference type="Pfam" id="PF02417">
    <property type="entry name" value="Chromate_transp"/>
    <property type="match status" value="2"/>
</dbReference>
<dbReference type="PIRSF" id="PIRSF004810">
    <property type="entry name" value="ChrA"/>
    <property type="match status" value="1"/>
</dbReference>
<feature type="chain" id="PRO_0000107003" description="Uncharacterized transporter MJ0718">
    <location>
        <begin position="1"/>
        <end position="402"/>
    </location>
</feature>
<feature type="transmembrane region" description="Helical" evidence="1">
    <location>
        <begin position="26"/>
        <end position="46"/>
    </location>
</feature>
<feature type="transmembrane region" description="Helical" evidence="1">
    <location>
        <begin position="67"/>
        <end position="87"/>
    </location>
</feature>
<feature type="transmembrane region" description="Helical" evidence="1">
    <location>
        <begin position="96"/>
        <end position="116"/>
    </location>
</feature>
<feature type="transmembrane region" description="Helical" evidence="1">
    <location>
        <begin position="126"/>
        <end position="146"/>
    </location>
</feature>
<feature type="transmembrane region" description="Helical" evidence="1">
    <location>
        <begin position="168"/>
        <end position="188"/>
    </location>
</feature>
<feature type="transmembrane region" description="Helical" evidence="1">
    <location>
        <begin position="213"/>
        <end position="233"/>
    </location>
</feature>
<feature type="transmembrane region" description="Helical" evidence="1">
    <location>
        <begin position="235"/>
        <end position="255"/>
    </location>
</feature>
<feature type="transmembrane region" description="Helical" evidence="1">
    <location>
        <begin position="289"/>
        <end position="309"/>
    </location>
</feature>
<feature type="transmembrane region" description="Helical" evidence="1">
    <location>
        <begin position="312"/>
        <end position="332"/>
    </location>
</feature>
<feature type="transmembrane region" description="Helical" evidence="1">
    <location>
        <begin position="338"/>
        <end position="358"/>
    </location>
</feature>
<feature type="transmembrane region" description="Helical" evidence="1">
    <location>
        <begin position="360"/>
        <end position="380"/>
    </location>
</feature>
<feature type="transmembrane region" description="Helical" evidence="1">
    <location>
        <begin position="381"/>
        <end position="401"/>
    </location>
</feature>
<evidence type="ECO:0000255" key="1"/>
<evidence type="ECO:0000305" key="2"/>
<accession>Q58128</accession>
<keyword id="KW-1003">Cell membrane</keyword>
<keyword id="KW-0472">Membrane</keyword>
<keyword id="KW-1185">Reference proteome</keyword>
<keyword id="KW-0812">Transmembrane</keyword>
<keyword id="KW-1133">Transmembrane helix</keyword>
<keyword id="KW-0813">Transport</keyword>